<feature type="transit peptide" description="Mitochondrion" evidence="1">
    <location>
        <begin position="1"/>
        <end position="21"/>
    </location>
</feature>
<feature type="chain" id="PRO_0000395780" description="Lon protease homolog, mitochondrial">
    <location>
        <begin position="22"/>
        <end position="1111"/>
    </location>
</feature>
<feature type="domain" description="Lon N-terminal" evidence="3">
    <location>
        <begin position="185"/>
        <end position="450"/>
    </location>
</feature>
<feature type="domain" description="Lon proteolytic" evidence="2">
    <location>
        <begin position="899"/>
        <end position="1085"/>
    </location>
</feature>
<feature type="region of interest" description="Disordered" evidence="4">
    <location>
        <begin position="85"/>
        <end position="177"/>
    </location>
</feature>
<feature type="region of interest" description="Disordered" evidence="4">
    <location>
        <begin position="288"/>
        <end position="311"/>
    </location>
</feature>
<feature type="region of interest" description="Disordered" evidence="4">
    <location>
        <begin position="819"/>
        <end position="866"/>
    </location>
</feature>
<feature type="compositionally biased region" description="Basic and acidic residues" evidence="4">
    <location>
        <begin position="88"/>
        <end position="125"/>
    </location>
</feature>
<feature type="compositionally biased region" description="Polar residues" evidence="4">
    <location>
        <begin position="126"/>
        <end position="135"/>
    </location>
</feature>
<feature type="compositionally biased region" description="Gly residues" evidence="4">
    <location>
        <begin position="145"/>
        <end position="167"/>
    </location>
</feature>
<feature type="compositionally biased region" description="Basic and acidic residues" evidence="4">
    <location>
        <begin position="294"/>
        <end position="306"/>
    </location>
</feature>
<feature type="compositionally biased region" description="Basic and acidic residues" evidence="4">
    <location>
        <begin position="819"/>
        <end position="835"/>
    </location>
</feature>
<feature type="compositionally biased region" description="Basic and acidic residues" evidence="4">
    <location>
        <begin position="853"/>
        <end position="865"/>
    </location>
</feature>
<feature type="active site" evidence="1">
    <location>
        <position position="991"/>
    </location>
</feature>
<feature type="active site" evidence="1">
    <location>
        <position position="1034"/>
    </location>
</feature>
<feature type="binding site" evidence="1">
    <location>
        <begin position="602"/>
        <end position="609"/>
    </location>
    <ligand>
        <name>ATP</name>
        <dbReference type="ChEBI" id="CHEBI:30616"/>
    </ligand>
</feature>
<reference key="1">
    <citation type="journal article" date="2004" name="Nature">
        <title>Genome evolution in yeasts.</title>
        <authorList>
            <person name="Dujon B."/>
            <person name="Sherman D."/>
            <person name="Fischer G."/>
            <person name="Durrens P."/>
            <person name="Casaregola S."/>
            <person name="Lafontaine I."/>
            <person name="de Montigny J."/>
            <person name="Marck C."/>
            <person name="Neuveglise C."/>
            <person name="Talla E."/>
            <person name="Goffard N."/>
            <person name="Frangeul L."/>
            <person name="Aigle M."/>
            <person name="Anthouard V."/>
            <person name="Babour A."/>
            <person name="Barbe V."/>
            <person name="Barnay S."/>
            <person name="Blanchin S."/>
            <person name="Beckerich J.-M."/>
            <person name="Beyne E."/>
            <person name="Bleykasten C."/>
            <person name="Boisrame A."/>
            <person name="Boyer J."/>
            <person name="Cattolico L."/>
            <person name="Confanioleri F."/>
            <person name="de Daruvar A."/>
            <person name="Despons L."/>
            <person name="Fabre E."/>
            <person name="Fairhead C."/>
            <person name="Ferry-Dumazet H."/>
            <person name="Groppi A."/>
            <person name="Hantraye F."/>
            <person name="Hennequin C."/>
            <person name="Jauniaux N."/>
            <person name="Joyet P."/>
            <person name="Kachouri R."/>
            <person name="Kerrest A."/>
            <person name="Koszul R."/>
            <person name="Lemaire M."/>
            <person name="Lesur I."/>
            <person name="Ma L."/>
            <person name="Muller H."/>
            <person name="Nicaud J.-M."/>
            <person name="Nikolski M."/>
            <person name="Oztas S."/>
            <person name="Ozier-Kalogeropoulos O."/>
            <person name="Pellenz S."/>
            <person name="Potier S."/>
            <person name="Richard G.-F."/>
            <person name="Straub M.-L."/>
            <person name="Suleau A."/>
            <person name="Swennen D."/>
            <person name="Tekaia F."/>
            <person name="Wesolowski-Louvel M."/>
            <person name="Westhof E."/>
            <person name="Wirth B."/>
            <person name="Zeniou-Meyer M."/>
            <person name="Zivanovic Y."/>
            <person name="Bolotin-Fukuhara M."/>
            <person name="Thierry A."/>
            <person name="Bouchier C."/>
            <person name="Caudron B."/>
            <person name="Scarpelli C."/>
            <person name="Gaillardin C."/>
            <person name="Weissenbach J."/>
            <person name="Wincker P."/>
            <person name="Souciet J.-L."/>
        </authorList>
    </citation>
    <scope>NUCLEOTIDE SEQUENCE [LARGE SCALE GENOMIC DNA]</scope>
    <source>
        <strain>ATCC 8585 / CBS 2359 / DSM 70799 / NBRC 1267 / NRRL Y-1140 / WM37</strain>
    </source>
</reference>
<sequence>MLRSSRSRLVTRNILLRQFKNGNNVRLMNATRFQHNGIVGNEKLASDSQKFVDESYHWMQYRKQMNDPVSRQRLEQLESQWVKSIQLKQDDKGKDIDQPESENRKKEEEQVPTEEKDNDTAKESETSQQRDSVAETQGPASTSGGASGNGESSGNGSGDDGNNGSGNGKPSKNAKQPFPEVYPQVMALPISRRPLFPGFYKAVVISDERVMKAIKDMSDRQQPYIGAFLLKDSTVDTDVIHKADEVYNVGVFAQVTSAFPSKDEKTGAETMTALLYPHRRIKLDELIPPTSEQNLKDESDVSKSEGVENNEQEVVKASLQKMENMKDVEEDDDENLTGFLKDYDVSLVNVSNLADKEFNPNSPVINALTSEILKVFKEISQLNTMFREQIATFSASIQSATTNIFEEPARLADFAAAVSAGEEEELQEILESLDIEQRLEKALTVLKKELMNAELQNKISKDVETKIQKRQREYYLMEQLKGIKRELGIDDGRDKLIESFKDRVSKLQLPETVQKVFDDEITKLATLETSQSEFGVIRNYLDWITSLPWGIISKEQYSIPKAKKILDEDHYGMKDVKDRILEFIAVGKLLGKVDGKIICFVGPPGVGKTSIGKSIARSLNRQFFRFSVGGMTDVAEIKGHRRTYIGALPGRVIQALKKCQTQNPLILIDEIDKIGHGGIHGDPAAALLELLDPEQNNSFLDNYMDIPIDLSKVLFVCTANSLETIPRPLLDRMEVIELTGYVAEEKVKIAENYLSPSAKKSAGLDNANVNITENAIVSLMKHYCRESGVRSLKKHIEKIYRKAALNVVKQLSIDDKPMENEEVKDQKDIKVKQSENKSSAEASTVESTTEENELIKTQKSHDNKGSLEVPETVSVTVDENNLKDYVGPPIFTTDRLYESTPPGVVMGLAWTSMGGCAMYVESVLEQPLTHSTQPTLERTGQLGDVMKESSRLAYSFSKMYLAKKFPENRFFEVAKIHLHCPEGATPKDGPSAGVTMASSFLSLALNKGLDPTVAMTGELTLTGKVLRIGGLREKAVAAKRSGAKTIIFPKDNLSDWAELPENVKEGLEPLAADWYEDVFQRLFGDVDTNKGNTVWSEDFKKIDEKRNKETK</sequence>
<accession>Q6CNR9</accession>
<gene>
    <name evidence="1" type="primary">PIM1</name>
    <name type="ordered locus">KLLA0E10407g</name>
</gene>
<keyword id="KW-0067">ATP-binding</keyword>
<keyword id="KW-0238">DNA-binding</keyword>
<keyword id="KW-0378">Hydrolase</keyword>
<keyword id="KW-0496">Mitochondrion</keyword>
<keyword id="KW-0547">Nucleotide-binding</keyword>
<keyword id="KW-0645">Protease</keyword>
<keyword id="KW-1185">Reference proteome</keyword>
<keyword id="KW-0720">Serine protease</keyword>
<keyword id="KW-0809">Transit peptide</keyword>
<name>LONM_KLULA</name>
<protein>
    <recommendedName>
        <fullName evidence="1">Lon protease homolog, mitochondrial</fullName>
        <ecNumber evidence="1">3.4.21.53</ecNumber>
    </recommendedName>
</protein>
<dbReference type="EC" id="3.4.21.53" evidence="1"/>
<dbReference type="EMBL" id="CR382125">
    <property type="protein sequence ID" value="CAG99507.1"/>
    <property type="molecule type" value="Genomic_DNA"/>
</dbReference>
<dbReference type="RefSeq" id="XP_454420.1">
    <property type="nucleotide sequence ID" value="XM_454420.1"/>
</dbReference>
<dbReference type="SMR" id="Q6CNR9"/>
<dbReference type="FunCoup" id="Q6CNR9">
    <property type="interactions" value="1059"/>
</dbReference>
<dbReference type="STRING" id="284590.Q6CNR9"/>
<dbReference type="MEROPS" id="S16.010"/>
<dbReference type="PaxDb" id="284590-Q6CNR9"/>
<dbReference type="KEGG" id="kla:KLLA0_E10407g"/>
<dbReference type="eggNOG" id="KOG2004">
    <property type="taxonomic scope" value="Eukaryota"/>
</dbReference>
<dbReference type="HOGENOM" id="CLU_004109_1_0_1"/>
<dbReference type="InParanoid" id="Q6CNR9"/>
<dbReference type="OMA" id="WLTNIPW"/>
<dbReference type="Proteomes" id="UP000000598">
    <property type="component" value="Chromosome E"/>
</dbReference>
<dbReference type="GO" id="GO:0005759">
    <property type="term" value="C:mitochondrial matrix"/>
    <property type="evidence" value="ECO:0007669"/>
    <property type="project" value="UniProtKB-SubCell"/>
</dbReference>
<dbReference type="GO" id="GO:0005524">
    <property type="term" value="F:ATP binding"/>
    <property type="evidence" value="ECO:0007669"/>
    <property type="project" value="UniProtKB-UniRule"/>
</dbReference>
<dbReference type="GO" id="GO:0016887">
    <property type="term" value="F:ATP hydrolysis activity"/>
    <property type="evidence" value="ECO:0007669"/>
    <property type="project" value="UniProtKB-UniRule"/>
</dbReference>
<dbReference type="GO" id="GO:0004176">
    <property type="term" value="F:ATP-dependent peptidase activity"/>
    <property type="evidence" value="ECO:0007669"/>
    <property type="project" value="UniProtKB-UniRule"/>
</dbReference>
<dbReference type="GO" id="GO:0043565">
    <property type="term" value="F:sequence-specific DNA binding"/>
    <property type="evidence" value="ECO:0007669"/>
    <property type="project" value="UniProtKB-UniRule"/>
</dbReference>
<dbReference type="GO" id="GO:0004252">
    <property type="term" value="F:serine-type endopeptidase activity"/>
    <property type="evidence" value="ECO:0007669"/>
    <property type="project" value="UniProtKB-UniRule"/>
</dbReference>
<dbReference type="GO" id="GO:0003697">
    <property type="term" value="F:single-stranded DNA binding"/>
    <property type="evidence" value="ECO:0007669"/>
    <property type="project" value="TreeGrafter"/>
</dbReference>
<dbReference type="GO" id="GO:0034599">
    <property type="term" value="P:cellular response to oxidative stress"/>
    <property type="evidence" value="ECO:0007669"/>
    <property type="project" value="UniProtKB-UniRule"/>
</dbReference>
<dbReference type="GO" id="GO:0051131">
    <property type="term" value="P:chaperone-mediated protein complex assembly"/>
    <property type="evidence" value="ECO:0007669"/>
    <property type="project" value="UniProtKB-UniRule"/>
</dbReference>
<dbReference type="GO" id="GO:0007005">
    <property type="term" value="P:mitochondrion organization"/>
    <property type="evidence" value="ECO:0007669"/>
    <property type="project" value="TreeGrafter"/>
</dbReference>
<dbReference type="GO" id="GO:0070407">
    <property type="term" value="P:oxidation-dependent protein catabolic process"/>
    <property type="evidence" value="ECO:0007669"/>
    <property type="project" value="UniProtKB-UniRule"/>
</dbReference>
<dbReference type="GO" id="GO:0006515">
    <property type="term" value="P:protein quality control for misfolded or incompletely synthesized proteins"/>
    <property type="evidence" value="ECO:0007669"/>
    <property type="project" value="UniProtKB-UniRule"/>
</dbReference>
<dbReference type="CDD" id="cd19500">
    <property type="entry name" value="RecA-like_Lon"/>
    <property type="match status" value="1"/>
</dbReference>
<dbReference type="FunFam" id="3.40.50.300:FF:000021">
    <property type="entry name" value="Lon protease homolog"/>
    <property type="match status" value="1"/>
</dbReference>
<dbReference type="FunFam" id="1.20.5.5270:FF:000001">
    <property type="entry name" value="Lon protease homolog, mitochondrial"/>
    <property type="match status" value="1"/>
</dbReference>
<dbReference type="FunFam" id="1.20.58.1480:FF:000003">
    <property type="entry name" value="Lon protease homolog, mitochondrial"/>
    <property type="match status" value="1"/>
</dbReference>
<dbReference type="FunFam" id="2.30.130.40:FF:000010">
    <property type="entry name" value="Lon protease homolog, mitochondrial"/>
    <property type="match status" value="1"/>
</dbReference>
<dbReference type="FunFam" id="3.30.230.10:FF:000015">
    <property type="entry name" value="Lon protease homolog, mitochondrial"/>
    <property type="match status" value="1"/>
</dbReference>
<dbReference type="Gene3D" id="1.10.8.60">
    <property type="match status" value="1"/>
</dbReference>
<dbReference type="Gene3D" id="1.20.5.5270">
    <property type="match status" value="1"/>
</dbReference>
<dbReference type="Gene3D" id="1.20.58.1480">
    <property type="match status" value="1"/>
</dbReference>
<dbReference type="Gene3D" id="3.30.230.10">
    <property type="match status" value="1"/>
</dbReference>
<dbReference type="Gene3D" id="2.30.130.40">
    <property type="entry name" value="LON domain-like"/>
    <property type="match status" value="1"/>
</dbReference>
<dbReference type="Gene3D" id="3.40.50.300">
    <property type="entry name" value="P-loop containing nucleotide triphosphate hydrolases"/>
    <property type="match status" value="1"/>
</dbReference>
<dbReference type="HAMAP" id="MF_03120">
    <property type="entry name" value="lonm_euk"/>
    <property type="match status" value="1"/>
</dbReference>
<dbReference type="InterPro" id="IPR003593">
    <property type="entry name" value="AAA+_ATPase"/>
</dbReference>
<dbReference type="InterPro" id="IPR003959">
    <property type="entry name" value="ATPase_AAA_core"/>
</dbReference>
<dbReference type="InterPro" id="IPR004815">
    <property type="entry name" value="Lon_bac/euk-typ"/>
</dbReference>
<dbReference type="InterPro" id="IPR054594">
    <property type="entry name" value="Lon_lid"/>
</dbReference>
<dbReference type="InterPro" id="IPR008269">
    <property type="entry name" value="Lon_proteolytic"/>
</dbReference>
<dbReference type="InterPro" id="IPR027065">
    <property type="entry name" value="Lon_Prtase"/>
</dbReference>
<dbReference type="InterPro" id="IPR003111">
    <property type="entry name" value="Lon_prtase_N"/>
</dbReference>
<dbReference type="InterPro" id="IPR046336">
    <property type="entry name" value="Lon_prtase_N_sf"/>
</dbReference>
<dbReference type="InterPro" id="IPR027503">
    <property type="entry name" value="Lonm_euk"/>
</dbReference>
<dbReference type="InterPro" id="IPR027417">
    <property type="entry name" value="P-loop_NTPase"/>
</dbReference>
<dbReference type="InterPro" id="IPR008268">
    <property type="entry name" value="Peptidase_S16_AS"/>
</dbReference>
<dbReference type="InterPro" id="IPR015947">
    <property type="entry name" value="PUA-like_sf"/>
</dbReference>
<dbReference type="InterPro" id="IPR020568">
    <property type="entry name" value="Ribosomal_Su5_D2-typ_SF"/>
</dbReference>
<dbReference type="InterPro" id="IPR014721">
    <property type="entry name" value="Ribsml_uS5_D2-typ_fold_subgr"/>
</dbReference>
<dbReference type="NCBIfam" id="TIGR00763">
    <property type="entry name" value="lon"/>
    <property type="match status" value="1"/>
</dbReference>
<dbReference type="PANTHER" id="PTHR43718">
    <property type="entry name" value="LON PROTEASE"/>
    <property type="match status" value="1"/>
</dbReference>
<dbReference type="PANTHER" id="PTHR43718:SF2">
    <property type="entry name" value="LON PROTEASE HOMOLOG, MITOCHONDRIAL"/>
    <property type="match status" value="1"/>
</dbReference>
<dbReference type="Pfam" id="PF00004">
    <property type="entry name" value="AAA"/>
    <property type="match status" value="1"/>
</dbReference>
<dbReference type="Pfam" id="PF05362">
    <property type="entry name" value="Lon_C"/>
    <property type="match status" value="1"/>
</dbReference>
<dbReference type="Pfam" id="PF22667">
    <property type="entry name" value="Lon_lid"/>
    <property type="match status" value="1"/>
</dbReference>
<dbReference type="Pfam" id="PF02190">
    <property type="entry name" value="LON_substr_bdg"/>
    <property type="match status" value="1"/>
</dbReference>
<dbReference type="PRINTS" id="PR00830">
    <property type="entry name" value="ENDOLAPTASE"/>
</dbReference>
<dbReference type="SMART" id="SM00382">
    <property type="entry name" value="AAA"/>
    <property type="match status" value="1"/>
</dbReference>
<dbReference type="SMART" id="SM00464">
    <property type="entry name" value="LON"/>
    <property type="match status" value="1"/>
</dbReference>
<dbReference type="SUPFAM" id="SSF52540">
    <property type="entry name" value="P-loop containing nucleoside triphosphate hydrolases"/>
    <property type="match status" value="1"/>
</dbReference>
<dbReference type="SUPFAM" id="SSF88697">
    <property type="entry name" value="PUA domain-like"/>
    <property type="match status" value="1"/>
</dbReference>
<dbReference type="SUPFAM" id="SSF54211">
    <property type="entry name" value="Ribosomal protein S5 domain 2-like"/>
    <property type="match status" value="1"/>
</dbReference>
<dbReference type="PROSITE" id="PS51787">
    <property type="entry name" value="LON_N"/>
    <property type="match status" value="1"/>
</dbReference>
<dbReference type="PROSITE" id="PS51786">
    <property type="entry name" value="LON_PROTEOLYTIC"/>
    <property type="match status" value="1"/>
</dbReference>
<dbReference type="PROSITE" id="PS01046">
    <property type="entry name" value="LON_SER"/>
    <property type="match status" value="1"/>
</dbReference>
<evidence type="ECO:0000255" key="1">
    <source>
        <dbReference type="HAMAP-Rule" id="MF_03120"/>
    </source>
</evidence>
<evidence type="ECO:0000255" key="2">
    <source>
        <dbReference type="PROSITE-ProRule" id="PRU01122"/>
    </source>
</evidence>
<evidence type="ECO:0000255" key="3">
    <source>
        <dbReference type="PROSITE-ProRule" id="PRU01123"/>
    </source>
</evidence>
<evidence type="ECO:0000256" key="4">
    <source>
        <dbReference type="SAM" id="MobiDB-lite"/>
    </source>
</evidence>
<proteinExistence type="inferred from homology"/>
<organism>
    <name type="scientific">Kluyveromyces lactis (strain ATCC 8585 / CBS 2359 / DSM 70799 / NBRC 1267 / NRRL Y-1140 / WM37)</name>
    <name type="common">Yeast</name>
    <name type="synonym">Candida sphaerica</name>
    <dbReference type="NCBI Taxonomy" id="284590"/>
    <lineage>
        <taxon>Eukaryota</taxon>
        <taxon>Fungi</taxon>
        <taxon>Dikarya</taxon>
        <taxon>Ascomycota</taxon>
        <taxon>Saccharomycotina</taxon>
        <taxon>Saccharomycetes</taxon>
        <taxon>Saccharomycetales</taxon>
        <taxon>Saccharomycetaceae</taxon>
        <taxon>Kluyveromyces</taxon>
    </lineage>
</organism>
<comment type="function">
    <text evidence="1">ATP-dependent serine protease that mediates the selective degradation of misfolded, unassembled or oxidatively damaged polypeptides as well as certain short-lived regulatory proteins in the mitochondrial matrix. May also have a chaperone function in the assembly of inner membrane protein complexes. Participates in the regulation of mitochondrial gene expression and in the maintenance of the integrity of the mitochondrial genome. Binds to mitochondrial DNA in a site-specific manner.</text>
</comment>
<comment type="catalytic activity">
    <reaction evidence="1">
        <text>Hydrolysis of proteins in presence of ATP.</text>
        <dbReference type="EC" id="3.4.21.53"/>
    </reaction>
</comment>
<comment type="subunit">
    <text evidence="1">Homohexamer or homoheptamer. Organized in a ring with a central cavity.</text>
</comment>
<comment type="subcellular location">
    <subcellularLocation>
        <location evidence="1">Mitochondrion matrix</location>
    </subcellularLocation>
</comment>
<comment type="similarity">
    <text evidence="1">Belongs to the peptidase S16 family.</text>
</comment>